<accession>M2T7Z1</accession>
<reference key="1">
    <citation type="journal article" date="2012" name="PLoS Pathog.">
        <title>Diverse lifestyles and strategies of plant pathogenesis encoded in the genomes of eighteen Dothideomycetes fungi.</title>
        <authorList>
            <person name="Ohm R.A."/>
            <person name="Feau N."/>
            <person name="Henrissat B."/>
            <person name="Schoch C.L."/>
            <person name="Horwitz B.A."/>
            <person name="Barry K.W."/>
            <person name="Condon B.J."/>
            <person name="Copeland A.C."/>
            <person name="Dhillon B."/>
            <person name="Glaser F."/>
            <person name="Hesse C.N."/>
            <person name="Kosti I."/>
            <person name="LaButti K."/>
            <person name="Lindquist E.A."/>
            <person name="Lucas S."/>
            <person name="Salamov A.A."/>
            <person name="Bradshaw R.E."/>
            <person name="Ciuffetti L."/>
            <person name="Hamelin R.C."/>
            <person name="Kema G.H.J."/>
            <person name="Lawrence C."/>
            <person name="Scott J.A."/>
            <person name="Spatafora J.W."/>
            <person name="Turgeon B.G."/>
            <person name="de Wit P.J.G.M."/>
            <person name="Zhong S."/>
            <person name="Goodwin S.B."/>
            <person name="Grigoriev I.V."/>
        </authorList>
    </citation>
    <scope>NUCLEOTIDE SEQUENCE [LARGE SCALE GENOMIC DNA]</scope>
    <source>
        <strain>C5 / ATCC 48332 / race O</strain>
    </source>
</reference>
<reference key="2">
    <citation type="journal article" date="2013" name="PLoS Genet.">
        <title>Comparative genome structure, secondary metabolite, and effector coding capacity across Cochliobolus pathogens.</title>
        <authorList>
            <person name="Condon B.J."/>
            <person name="Leng Y."/>
            <person name="Wu D."/>
            <person name="Bushley K.E."/>
            <person name="Ohm R.A."/>
            <person name="Otillar R."/>
            <person name="Martin J."/>
            <person name="Schackwitz W."/>
            <person name="Grimwood J."/>
            <person name="MohdZainudin N."/>
            <person name="Xue C."/>
            <person name="Wang R."/>
            <person name="Manning V.A."/>
            <person name="Dhillon B."/>
            <person name="Tu Z.J."/>
            <person name="Steffenson B.J."/>
            <person name="Salamov A."/>
            <person name="Sun H."/>
            <person name="Lowry S."/>
            <person name="LaButti K."/>
            <person name="Han J."/>
            <person name="Copeland A."/>
            <person name="Lindquist E."/>
            <person name="Barry K."/>
            <person name="Schmutz J."/>
            <person name="Baker S.E."/>
            <person name="Ciuffetti L.M."/>
            <person name="Grigoriev I.V."/>
            <person name="Zhong S."/>
            <person name="Turgeon B.G."/>
        </authorList>
    </citation>
    <scope>NUCLEOTIDE SEQUENCE [LARGE SCALE GENOMIC DNA]</scope>
    <source>
        <strain>C5 / ATCC 48332 / race O</strain>
    </source>
</reference>
<reference key="3">
    <citation type="journal article" date="2017" name="Org. Lett.">
        <title>Focused genome mining of structurally related sesterterpenes: enzymatic formation of enantiomeric and diastereomeric products.</title>
        <authorList>
            <person name="Narita K."/>
            <person name="Sato H."/>
            <person name="Minami A."/>
            <person name="Kudo K."/>
            <person name="Gao L."/>
            <person name="Liu C."/>
            <person name="Ozaki T."/>
            <person name="Kodama M."/>
            <person name="Lei X."/>
            <person name="Taniguchi T."/>
            <person name="Monde K."/>
            <person name="Yamazaki M."/>
            <person name="Uchiyama M."/>
            <person name="Oikawa H."/>
        </authorList>
    </citation>
    <scope>FUNCTION</scope>
</reference>
<reference key="4">
    <citation type="journal article" date="2018" name="J. Org. Chem.">
        <title>Total biosynthesis of antiangiogenic agent (-)-terpestacin by artificial reconstitution of the biosynthetic machinery in Aspergillus oryzae.</title>
        <authorList>
            <person name="Narita K."/>
            <person name="Minami A."/>
            <person name="Ozaki T."/>
            <person name="Liu C."/>
            <person name="Kodama M."/>
            <person name="Oikawa H."/>
        </authorList>
    </citation>
    <scope>FUNCTION</scope>
    <scope>CATALYTIC ACTIVITY</scope>
    <scope>PATHWAY</scope>
</reference>
<name>TPCD_COCH5</name>
<sequence length="518" mass="55674">MQLLGTLSWLYAIQASIGSSKAVTADYGSCHDACTLLSGTLSVELGGSHVSDYKHYPTIANGSSVASLFWAQQQQSAQPACLVHVYSPQDVATVISVSRSTNCPFAVRGGGHSDIPGASNINGGITVNMAALSNVELHESEGLARVGAGARWGDVYKELEKSNKTVVGGRLTGVGVGGLVLGGGLSHFSGLHGWACDNVRNYEVVLANGTLVIASNSSNPDLYRALRGGGNSFGVVTRFDLDVFQQGPMWGGLHVWPFQPSVTSAITRGFVEFAHNAPSDPHVSLFAGLGYKQGGFAWAVGQYDALGRVEPPIFTQFKDDVEVYGTAKIVSTARLTSLSDLADELNQSEPAGIRSRFTTATFTADAELLILIVEFFEEQVQKALDKGLDKDQRFAPMLGIQPLTQNLLRAQETRGGNVMGLRDLDAPLVVCSFGWEWSYESDDKVVIDGIKAVLDHSVSAAKEKGLYHPFKYMNYAALDQDPIESYGKENIEFLKRVRAMYDPEGVFTNLVPGGHKIN</sequence>
<gene>
    <name evidence="7" type="primary">tpcD</name>
    <name type="ORF">COCHEDRAFT_1171747</name>
</gene>
<comment type="function">
    <text evidence="5 6">FAD-dependent monooxygenase; part of the gene cluster that mediates the biosynthesis of terpestacin (PubMed:29185768). The bifunctional terpene synthase tpcA converts isopentenyl diphosphate (IPP) and dimethylallyl diphosphate (DMAPP) into the sesterterpene preterpestacin I (PubMed:29185768). The C-terminal prenyltransferase (PT) domain of tpcA catalyzes formation of GFPP, whereas the N-terminal terpene cyclase (TC) domain catalyzes the cyclization of GFPP into preterpestacin I (PubMed:29185768). The cytochrome P450 monooxygenase tpcB then hydroxylates preterpestacin I to yield 24-hydroxypreterpstacin I (renamed as preterpestacin II) whereas the cytochrome P450 monooxygenase tpcC further hydroxylates preterpestacin II to yield 16,17-dihydroxypreterpestacin II (renamed as preterpestacin III) (PubMed:29417814). Finally, the FAD-dependent monooxygenase tpcD converts preterpestacin III into terpestacin (PubMed:29417814).</text>
</comment>
<comment type="cofactor">
    <cofactor evidence="8">
        <name>FAD</name>
        <dbReference type="ChEBI" id="CHEBI:57692"/>
    </cofactor>
</comment>
<comment type="pathway">
    <text evidence="5">Secondary metabolite biosynthesis; terpenoid biosynthesis.</text>
</comment>
<comment type="similarity">
    <text evidence="8">Belongs to the oxygen-dependent FAD-linked oxidoreductase family.</text>
</comment>
<protein>
    <recommendedName>
        <fullName evidence="7">FAD-dependent monooxygenase tpcD</fullName>
        <ecNumber evidence="6">1.-.-.-</ecNumber>
    </recommendedName>
    <alternativeName>
        <fullName evidence="7">Terpestacin biosynthesis cluster protein D</fullName>
    </alternativeName>
</protein>
<proteinExistence type="evidence at protein level"/>
<dbReference type="EC" id="1.-.-.-" evidence="6"/>
<dbReference type="EMBL" id="KB445573">
    <property type="protein sequence ID" value="EMD93705.1"/>
    <property type="molecule type" value="Genomic_DNA"/>
</dbReference>
<dbReference type="SMR" id="M2T7Z1"/>
<dbReference type="STRING" id="701091.M2T7Z1"/>
<dbReference type="GlyCosmos" id="M2T7Z1">
    <property type="glycosylation" value="5 sites, No reported glycans"/>
</dbReference>
<dbReference type="eggNOG" id="KOG1231">
    <property type="taxonomic scope" value="Eukaryota"/>
</dbReference>
<dbReference type="HOGENOM" id="CLU_018354_1_2_1"/>
<dbReference type="OMA" id="LPMISKF"/>
<dbReference type="OrthoDB" id="13827at28556"/>
<dbReference type="UniPathway" id="UPA00213"/>
<dbReference type="Proteomes" id="UP000016936">
    <property type="component" value="Unassembled WGS sequence"/>
</dbReference>
<dbReference type="GO" id="GO:0071949">
    <property type="term" value="F:FAD binding"/>
    <property type="evidence" value="ECO:0007669"/>
    <property type="project" value="InterPro"/>
</dbReference>
<dbReference type="GO" id="GO:0016491">
    <property type="term" value="F:oxidoreductase activity"/>
    <property type="evidence" value="ECO:0007669"/>
    <property type="project" value="UniProtKB-KW"/>
</dbReference>
<dbReference type="GO" id="GO:0016114">
    <property type="term" value="P:terpenoid biosynthetic process"/>
    <property type="evidence" value="ECO:0007669"/>
    <property type="project" value="UniProtKB-UniPathway"/>
</dbReference>
<dbReference type="Gene3D" id="3.30.465.10">
    <property type="match status" value="1"/>
</dbReference>
<dbReference type="Gene3D" id="3.40.462.20">
    <property type="match status" value="1"/>
</dbReference>
<dbReference type="InterPro" id="IPR012951">
    <property type="entry name" value="BBE"/>
</dbReference>
<dbReference type="InterPro" id="IPR016166">
    <property type="entry name" value="FAD-bd_PCMH"/>
</dbReference>
<dbReference type="InterPro" id="IPR036318">
    <property type="entry name" value="FAD-bd_PCMH-like_sf"/>
</dbReference>
<dbReference type="InterPro" id="IPR016169">
    <property type="entry name" value="FAD-bd_PCMH_sub2"/>
</dbReference>
<dbReference type="InterPro" id="IPR050416">
    <property type="entry name" value="FAD-linked_Oxidoreductase"/>
</dbReference>
<dbReference type="InterPro" id="IPR006094">
    <property type="entry name" value="Oxid_FAD_bind_N"/>
</dbReference>
<dbReference type="PANTHER" id="PTHR42973">
    <property type="entry name" value="BINDING OXIDOREDUCTASE, PUTATIVE (AFU_ORTHOLOGUE AFUA_1G17690)-RELATED"/>
    <property type="match status" value="1"/>
</dbReference>
<dbReference type="PANTHER" id="PTHR42973:SF13">
    <property type="entry name" value="FAD-BINDING PCMH-TYPE DOMAIN-CONTAINING PROTEIN"/>
    <property type="match status" value="1"/>
</dbReference>
<dbReference type="Pfam" id="PF08031">
    <property type="entry name" value="BBE"/>
    <property type="match status" value="1"/>
</dbReference>
<dbReference type="Pfam" id="PF01565">
    <property type="entry name" value="FAD_binding_4"/>
    <property type="match status" value="1"/>
</dbReference>
<dbReference type="SUPFAM" id="SSF56176">
    <property type="entry name" value="FAD-binding/transporter-associated domain-like"/>
    <property type="match status" value="1"/>
</dbReference>
<dbReference type="PROSITE" id="PS51387">
    <property type="entry name" value="FAD_PCMH"/>
    <property type="match status" value="1"/>
</dbReference>
<feature type="signal peptide" evidence="2">
    <location>
        <begin position="1"/>
        <end position="22"/>
    </location>
</feature>
<feature type="chain" id="PRO_5012542481" description="FAD-dependent monooxygenase tpcD">
    <location>
        <begin position="23"/>
        <end position="518"/>
    </location>
</feature>
<feature type="domain" description="FAD-binding PCMH-type" evidence="4">
    <location>
        <begin position="75"/>
        <end position="246"/>
    </location>
</feature>
<feature type="modified residue" description="Pros-8alpha-FAD histidine" evidence="1">
    <location>
        <position position="112"/>
    </location>
</feature>
<feature type="glycosylation site" description="N-linked (GlcNAc...) asparagine" evidence="3">
    <location>
        <position position="61"/>
    </location>
</feature>
<feature type="glycosylation site" description="N-linked (GlcNAc...) asparagine" evidence="3">
    <location>
        <position position="163"/>
    </location>
</feature>
<feature type="glycosylation site" description="N-linked (GlcNAc...) asparagine" evidence="3">
    <location>
        <position position="208"/>
    </location>
</feature>
<feature type="glycosylation site" description="N-linked (GlcNAc...) asparagine" evidence="3">
    <location>
        <position position="216"/>
    </location>
</feature>
<feature type="glycosylation site" description="N-linked (GlcNAc...) asparagine" evidence="3">
    <location>
        <position position="346"/>
    </location>
</feature>
<organism>
    <name type="scientific">Cochliobolus heterostrophus (strain C5 / ATCC 48332 / race O)</name>
    <name type="common">Southern corn leaf blight fungus</name>
    <name type="synonym">Bipolaris maydis</name>
    <dbReference type="NCBI Taxonomy" id="701091"/>
    <lineage>
        <taxon>Eukaryota</taxon>
        <taxon>Fungi</taxon>
        <taxon>Dikarya</taxon>
        <taxon>Ascomycota</taxon>
        <taxon>Pezizomycotina</taxon>
        <taxon>Dothideomycetes</taxon>
        <taxon>Pleosporomycetidae</taxon>
        <taxon>Pleosporales</taxon>
        <taxon>Pleosporineae</taxon>
        <taxon>Pleosporaceae</taxon>
        <taxon>Bipolaris</taxon>
    </lineage>
</organism>
<keyword id="KW-0274">FAD</keyword>
<keyword id="KW-0285">Flavoprotein</keyword>
<keyword id="KW-0325">Glycoprotein</keyword>
<keyword id="KW-0560">Oxidoreductase</keyword>
<keyword id="KW-1185">Reference proteome</keyword>
<keyword id="KW-0732">Signal</keyword>
<evidence type="ECO:0000250" key="1">
    <source>
        <dbReference type="UniProtKB" id="P08159"/>
    </source>
</evidence>
<evidence type="ECO:0000255" key="2"/>
<evidence type="ECO:0000255" key="3">
    <source>
        <dbReference type="PROSITE-ProRule" id="PRU00498"/>
    </source>
</evidence>
<evidence type="ECO:0000255" key="4">
    <source>
        <dbReference type="PROSITE-ProRule" id="PRU00718"/>
    </source>
</evidence>
<evidence type="ECO:0000269" key="5">
    <source>
    </source>
</evidence>
<evidence type="ECO:0000269" key="6">
    <source>
    </source>
</evidence>
<evidence type="ECO:0000303" key="7">
    <source>
    </source>
</evidence>
<evidence type="ECO:0000305" key="8"/>